<proteinExistence type="inferred from homology"/>
<evidence type="ECO:0000250" key="1"/>
<evidence type="ECO:0000255" key="2">
    <source>
        <dbReference type="HAMAP-Rule" id="MF_00103"/>
    </source>
</evidence>
<sequence length="271" mass="29859">MPELPEVEVTRQGIAPHLVEQTVVDLIVRNASLRWPVPELAKQIIGQTIRQVRRRAKYLLIDTDAGTSIVHLGMSGSLRILPHDTPVEKHDHIDLVLANGRILRFNDPRRFGAWLWCQLPEEAHPLLEKLGPEPLTDAFNVNQLAAALAGKKKAIKLCLMDNHIVVGVGNIYANEALFAAGIHPEAEAGKIDIERLTVLVAEVKQILAHAIKQGGTTLKDFTNAEGKPGYFAQKLHVYGRGGETCTQCGNLLSEIRLGQRTTVFCGICQTR</sequence>
<feature type="initiator methionine" description="Removed" evidence="1">
    <location>
        <position position="1"/>
    </location>
</feature>
<feature type="chain" id="PRO_1000008776" description="Formamidopyrimidine-DNA glycosylase">
    <location>
        <begin position="2"/>
        <end position="271"/>
    </location>
</feature>
<feature type="zinc finger region" description="FPG-type" evidence="2">
    <location>
        <begin position="236"/>
        <end position="270"/>
    </location>
</feature>
<feature type="active site" description="Schiff-base intermediate with DNA" evidence="2">
    <location>
        <position position="2"/>
    </location>
</feature>
<feature type="active site" description="Proton donor" evidence="2">
    <location>
        <position position="3"/>
    </location>
</feature>
<feature type="active site" description="Proton donor; for beta-elimination activity" evidence="2">
    <location>
        <position position="57"/>
    </location>
</feature>
<feature type="active site" description="Proton donor; for delta-elimination activity" evidence="2">
    <location>
        <position position="260"/>
    </location>
</feature>
<feature type="binding site" evidence="2">
    <location>
        <position position="90"/>
    </location>
    <ligand>
        <name>DNA</name>
        <dbReference type="ChEBI" id="CHEBI:16991"/>
    </ligand>
</feature>
<feature type="binding site" evidence="2">
    <location>
        <position position="109"/>
    </location>
    <ligand>
        <name>DNA</name>
        <dbReference type="ChEBI" id="CHEBI:16991"/>
    </ligand>
</feature>
<feature type="binding site" evidence="2">
    <location>
        <position position="151"/>
    </location>
    <ligand>
        <name>DNA</name>
        <dbReference type="ChEBI" id="CHEBI:16991"/>
    </ligand>
</feature>
<protein>
    <recommendedName>
        <fullName evidence="2">Formamidopyrimidine-DNA glycosylase</fullName>
        <shortName evidence="2">Fapy-DNA glycosylase</shortName>
        <ecNumber evidence="2">3.2.2.23</ecNumber>
    </recommendedName>
    <alternativeName>
        <fullName evidence="2">DNA-(apurinic or apyrimidinic site) lyase MutM</fullName>
        <shortName evidence="2">AP lyase MutM</shortName>
        <ecNumber evidence="2">4.2.99.18</ecNumber>
    </alternativeName>
</protein>
<accession>Q0HPK4</accession>
<dbReference type="EC" id="3.2.2.23" evidence="2"/>
<dbReference type="EC" id="4.2.99.18" evidence="2"/>
<dbReference type="EMBL" id="CP000444">
    <property type="protein sequence ID" value="ABI44951.1"/>
    <property type="molecule type" value="Genomic_DNA"/>
</dbReference>
<dbReference type="SMR" id="Q0HPK4"/>
<dbReference type="KEGG" id="shm:Shewmr7_3974"/>
<dbReference type="HOGENOM" id="CLU_038423_1_1_6"/>
<dbReference type="GO" id="GO:0034039">
    <property type="term" value="F:8-oxo-7,8-dihydroguanine DNA N-glycosylase activity"/>
    <property type="evidence" value="ECO:0007669"/>
    <property type="project" value="TreeGrafter"/>
</dbReference>
<dbReference type="GO" id="GO:0140078">
    <property type="term" value="F:class I DNA-(apurinic or apyrimidinic site) endonuclease activity"/>
    <property type="evidence" value="ECO:0007669"/>
    <property type="project" value="UniProtKB-EC"/>
</dbReference>
<dbReference type="GO" id="GO:0003684">
    <property type="term" value="F:damaged DNA binding"/>
    <property type="evidence" value="ECO:0007669"/>
    <property type="project" value="InterPro"/>
</dbReference>
<dbReference type="GO" id="GO:0008270">
    <property type="term" value="F:zinc ion binding"/>
    <property type="evidence" value="ECO:0007669"/>
    <property type="project" value="UniProtKB-UniRule"/>
</dbReference>
<dbReference type="GO" id="GO:0006284">
    <property type="term" value="P:base-excision repair"/>
    <property type="evidence" value="ECO:0007669"/>
    <property type="project" value="InterPro"/>
</dbReference>
<dbReference type="CDD" id="cd08966">
    <property type="entry name" value="EcFpg-like_N"/>
    <property type="match status" value="1"/>
</dbReference>
<dbReference type="FunFam" id="1.10.8.50:FF:000003">
    <property type="entry name" value="Formamidopyrimidine-DNA glycosylase"/>
    <property type="match status" value="1"/>
</dbReference>
<dbReference type="FunFam" id="3.20.190.10:FF:000001">
    <property type="entry name" value="Formamidopyrimidine-DNA glycosylase"/>
    <property type="match status" value="1"/>
</dbReference>
<dbReference type="Gene3D" id="1.10.8.50">
    <property type="match status" value="1"/>
</dbReference>
<dbReference type="Gene3D" id="3.20.190.10">
    <property type="entry name" value="MutM-like, N-terminal"/>
    <property type="match status" value="1"/>
</dbReference>
<dbReference type="HAMAP" id="MF_00103">
    <property type="entry name" value="Fapy_DNA_glycosyl"/>
    <property type="match status" value="1"/>
</dbReference>
<dbReference type="InterPro" id="IPR015886">
    <property type="entry name" value="DNA_glyclase/AP_lyase_DNA-bd"/>
</dbReference>
<dbReference type="InterPro" id="IPR015887">
    <property type="entry name" value="DNA_glyclase_Znf_dom_DNA_BS"/>
</dbReference>
<dbReference type="InterPro" id="IPR020629">
    <property type="entry name" value="Formamido-pyr_DNA_Glyclase"/>
</dbReference>
<dbReference type="InterPro" id="IPR012319">
    <property type="entry name" value="FPG_cat"/>
</dbReference>
<dbReference type="InterPro" id="IPR035937">
    <property type="entry name" value="MutM-like_N-ter"/>
</dbReference>
<dbReference type="InterPro" id="IPR010979">
    <property type="entry name" value="Ribosomal_uS13-like_H2TH"/>
</dbReference>
<dbReference type="InterPro" id="IPR000214">
    <property type="entry name" value="Znf_DNA_glyclase/AP_lyase"/>
</dbReference>
<dbReference type="InterPro" id="IPR010663">
    <property type="entry name" value="Znf_FPG/IleRS"/>
</dbReference>
<dbReference type="NCBIfam" id="TIGR00577">
    <property type="entry name" value="fpg"/>
    <property type="match status" value="1"/>
</dbReference>
<dbReference type="NCBIfam" id="NF002211">
    <property type="entry name" value="PRK01103.1"/>
    <property type="match status" value="1"/>
</dbReference>
<dbReference type="PANTHER" id="PTHR22993">
    <property type="entry name" value="FORMAMIDOPYRIMIDINE-DNA GLYCOSYLASE"/>
    <property type="match status" value="1"/>
</dbReference>
<dbReference type="PANTHER" id="PTHR22993:SF9">
    <property type="entry name" value="FORMAMIDOPYRIMIDINE-DNA GLYCOSYLASE"/>
    <property type="match status" value="1"/>
</dbReference>
<dbReference type="Pfam" id="PF01149">
    <property type="entry name" value="Fapy_DNA_glyco"/>
    <property type="match status" value="1"/>
</dbReference>
<dbReference type="Pfam" id="PF06831">
    <property type="entry name" value="H2TH"/>
    <property type="match status" value="1"/>
</dbReference>
<dbReference type="Pfam" id="PF06827">
    <property type="entry name" value="zf-FPG_IleRS"/>
    <property type="match status" value="1"/>
</dbReference>
<dbReference type="SMART" id="SM00898">
    <property type="entry name" value="Fapy_DNA_glyco"/>
    <property type="match status" value="1"/>
</dbReference>
<dbReference type="SMART" id="SM01232">
    <property type="entry name" value="H2TH"/>
    <property type="match status" value="1"/>
</dbReference>
<dbReference type="SUPFAM" id="SSF57716">
    <property type="entry name" value="Glucocorticoid receptor-like (DNA-binding domain)"/>
    <property type="match status" value="1"/>
</dbReference>
<dbReference type="SUPFAM" id="SSF81624">
    <property type="entry name" value="N-terminal domain of MutM-like DNA repair proteins"/>
    <property type="match status" value="1"/>
</dbReference>
<dbReference type="SUPFAM" id="SSF46946">
    <property type="entry name" value="S13-like H2TH domain"/>
    <property type="match status" value="1"/>
</dbReference>
<dbReference type="PROSITE" id="PS51068">
    <property type="entry name" value="FPG_CAT"/>
    <property type="match status" value="1"/>
</dbReference>
<dbReference type="PROSITE" id="PS01242">
    <property type="entry name" value="ZF_FPG_1"/>
    <property type="match status" value="1"/>
</dbReference>
<dbReference type="PROSITE" id="PS51066">
    <property type="entry name" value="ZF_FPG_2"/>
    <property type="match status" value="1"/>
</dbReference>
<gene>
    <name evidence="2" type="primary">mutM</name>
    <name evidence="2" type="synonym">fpg</name>
    <name type="ordered locus">Shewmr7_3974</name>
</gene>
<organism>
    <name type="scientific">Shewanella sp. (strain MR-7)</name>
    <dbReference type="NCBI Taxonomy" id="60481"/>
    <lineage>
        <taxon>Bacteria</taxon>
        <taxon>Pseudomonadati</taxon>
        <taxon>Pseudomonadota</taxon>
        <taxon>Gammaproteobacteria</taxon>
        <taxon>Alteromonadales</taxon>
        <taxon>Shewanellaceae</taxon>
        <taxon>Shewanella</taxon>
    </lineage>
</organism>
<reference key="1">
    <citation type="submission" date="2006-08" db="EMBL/GenBank/DDBJ databases">
        <title>Complete sequence of chromosome 1 of Shewanella sp. MR-7.</title>
        <authorList>
            <person name="Copeland A."/>
            <person name="Lucas S."/>
            <person name="Lapidus A."/>
            <person name="Barry K."/>
            <person name="Detter J.C."/>
            <person name="Glavina del Rio T."/>
            <person name="Hammon N."/>
            <person name="Israni S."/>
            <person name="Dalin E."/>
            <person name="Tice H."/>
            <person name="Pitluck S."/>
            <person name="Kiss H."/>
            <person name="Brettin T."/>
            <person name="Bruce D."/>
            <person name="Han C."/>
            <person name="Tapia R."/>
            <person name="Gilna P."/>
            <person name="Schmutz J."/>
            <person name="Larimer F."/>
            <person name="Land M."/>
            <person name="Hauser L."/>
            <person name="Kyrpides N."/>
            <person name="Mikhailova N."/>
            <person name="Nealson K."/>
            <person name="Konstantinidis K."/>
            <person name="Klappenbach J."/>
            <person name="Tiedje J."/>
            <person name="Richardson P."/>
        </authorList>
    </citation>
    <scope>NUCLEOTIDE SEQUENCE [LARGE SCALE GENOMIC DNA]</scope>
    <source>
        <strain>MR-7</strain>
    </source>
</reference>
<comment type="function">
    <text evidence="2">Involved in base excision repair of DNA damaged by oxidation or by mutagenic agents. Acts as a DNA glycosylase that recognizes and removes damaged bases. Has a preference for oxidized purines, such as 7,8-dihydro-8-oxoguanine (8-oxoG). Has AP (apurinic/apyrimidinic) lyase activity and introduces nicks in the DNA strand. Cleaves the DNA backbone by beta-delta elimination to generate a single-strand break at the site of the removed base with both 3'- and 5'-phosphates.</text>
</comment>
<comment type="catalytic activity">
    <reaction evidence="2">
        <text>Hydrolysis of DNA containing ring-opened 7-methylguanine residues, releasing 2,6-diamino-4-hydroxy-5-(N-methyl)formamidopyrimidine.</text>
        <dbReference type="EC" id="3.2.2.23"/>
    </reaction>
</comment>
<comment type="catalytic activity">
    <reaction evidence="2">
        <text>2'-deoxyribonucleotide-(2'-deoxyribose 5'-phosphate)-2'-deoxyribonucleotide-DNA = a 3'-end 2'-deoxyribonucleotide-(2,3-dehydro-2,3-deoxyribose 5'-phosphate)-DNA + a 5'-end 5'-phospho-2'-deoxyribonucleoside-DNA + H(+)</text>
        <dbReference type="Rhea" id="RHEA:66592"/>
        <dbReference type="Rhea" id="RHEA-COMP:13180"/>
        <dbReference type="Rhea" id="RHEA-COMP:16897"/>
        <dbReference type="Rhea" id="RHEA-COMP:17067"/>
        <dbReference type="ChEBI" id="CHEBI:15378"/>
        <dbReference type="ChEBI" id="CHEBI:136412"/>
        <dbReference type="ChEBI" id="CHEBI:157695"/>
        <dbReference type="ChEBI" id="CHEBI:167181"/>
        <dbReference type="EC" id="4.2.99.18"/>
    </reaction>
</comment>
<comment type="cofactor">
    <cofactor evidence="2">
        <name>Zn(2+)</name>
        <dbReference type="ChEBI" id="CHEBI:29105"/>
    </cofactor>
    <text evidence="2">Binds 1 zinc ion per subunit.</text>
</comment>
<comment type="subunit">
    <text evidence="2">Monomer.</text>
</comment>
<comment type="similarity">
    <text evidence="2">Belongs to the FPG family.</text>
</comment>
<keyword id="KW-0227">DNA damage</keyword>
<keyword id="KW-0234">DNA repair</keyword>
<keyword id="KW-0238">DNA-binding</keyword>
<keyword id="KW-0326">Glycosidase</keyword>
<keyword id="KW-0378">Hydrolase</keyword>
<keyword id="KW-0456">Lyase</keyword>
<keyword id="KW-0479">Metal-binding</keyword>
<keyword id="KW-0511">Multifunctional enzyme</keyword>
<keyword id="KW-0862">Zinc</keyword>
<keyword id="KW-0863">Zinc-finger</keyword>
<name>FPG_SHESR</name>